<dbReference type="EC" id="3.1.21.7" evidence="1"/>
<dbReference type="EMBL" id="BX908798">
    <property type="protein sequence ID" value="CAF23347.1"/>
    <property type="molecule type" value="Genomic_DNA"/>
</dbReference>
<dbReference type="RefSeq" id="WP_011175173.1">
    <property type="nucleotide sequence ID" value="NC_005861.2"/>
</dbReference>
<dbReference type="SMR" id="Q6MDK2"/>
<dbReference type="STRING" id="264201.pc0623"/>
<dbReference type="KEGG" id="pcu:PC_RS02985"/>
<dbReference type="eggNOG" id="COG1515">
    <property type="taxonomic scope" value="Bacteria"/>
</dbReference>
<dbReference type="HOGENOM" id="CLU_047631_1_1_0"/>
<dbReference type="OrthoDB" id="9790916at2"/>
<dbReference type="Proteomes" id="UP000000529">
    <property type="component" value="Chromosome"/>
</dbReference>
<dbReference type="GO" id="GO:0005737">
    <property type="term" value="C:cytoplasm"/>
    <property type="evidence" value="ECO:0007669"/>
    <property type="project" value="UniProtKB-SubCell"/>
</dbReference>
<dbReference type="GO" id="GO:0043737">
    <property type="term" value="F:deoxyribonuclease V activity"/>
    <property type="evidence" value="ECO:0007669"/>
    <property type="project" value="UniProtKB-UniRule"/>
</dbReference>
<dbReference type="GO" id="GO:0000287">
    <property type="term" value="F:magnesium ion binding"/>
    <property type="evidence" value="ECO:0007669"/>
    <property type="project" value="UniProtKB-UniRule"/>
</dbReference>
<dbReference type="GO" id="GO:0016891">
    <property type="term" value="F:RNA endonuclease activity, producing 5'-phosphomonoesters"/>
    <property type="evidence" value="ECO:0007669"/>
    <property type="project" value="TreeGrafter"/>
</dbReference>
<dbReference type="GO" id="GO:0003727">
    <property type="term" value="F:single-stranded RNA binding"/>
    <property type="evidence" value="ECO:0007669"/>
    <property type="project" value="TreeGrafter"/>
</dbReference>
<dbReference type="GO" id="GO:0006281">
    <property type="term" value="P:DNA repair"/>
    <property type="evidence" value="ECO:0007669"/>
    <property type="project" value="UniProtKB-UniRule"/>
</dbReference>
<dbReference type="CDD" id="cd06559">
    <property type="entry name" value="Endonuclease_V"/>
    <property type="match status" value="1"/>
</dbReference>
<dbReference type="Gene3D" id="3.30.2170.10">
    <property type="entry name" value="archaeoglobus fulgidus dsm 4304 superfamily"/>
    <property type="match status" value="1"/>
</dbReference>
<dbReference type="HAMAP" id="MF_00801">
    <property type="entry name" value="Endonuclease_5"/>
    <property type="match status" value="1"/>
</dbReference>
<dbReference type="InterPro" id="IPR007581">
    <property type="entry name" value="Endonuclease-V"/>
</dbReference>
<dbReference type="NCBIfam" id="NF008629">
    <property type="entry name" value="PRK11617.1"/>
    <property type="match status" value="1"/>
</dbReference>
<dbReference type="PANTHER" id="PTHR28511">
    <property type="entry name" value="ENDONUCLEASE V"/>
    <property type="match status" value="1"/>
</dbReference>
<dbReference type="PANTHER" id="PTHR28511:SF1">
    <property type="entry name" value="ENDONUCLEASE V"/>
    <property type="match status" value="1"/>
</dbReference>
<dbReference type="Pfam" id="PF04493">
    <property type="entry name" value="Endonuclease_5"/>
    <property type="match status" value="1"/>
</dbReference>
<reference key="1">
    <citation type="journal article" date="2004" name="Science">
        <title>Illuminating the evolutionary history of chlamydiae.</title>
        <authorList>
            <person name="Horn M."/>
            <person name="Collingro A."/>
            <person name="Schmitz-Esser S."/>
            <person name="Beier C.L."/>
            <person name="Purkhold U."/>
            <person name="Fartmann B."/>
            <person name="Brandt P."/>
            <person name="Nyakatura G.J."/>
            <person name="Droege M."/>
            <person name="Frishman D."/>
            <person name="Rattei T."/>
            <person name="Mewes H.-W."/>
            <person name="Wagner M."/>
        </authorList>
    </citation>
    <scope>NUCLEOTIDE SEQUENCE [LARGE SCALE GENOMIC DNA]</scope>
    <source>
        <strain>UWE25</strain>
    </source>
</reference>
<sequence>MSQRFNFDPSFLQPDSIEKATIIQKELANRICLEDEFNTPEFFGGMDVSNNLFDPKQIIYATAILLDSKMLSVQFHNSVSQRQTFPYIPGFLGFREAPALIDALESLPKLPDMIFVDGQGISHPRRLGIASHIGVLVNIPTIGVAKNILFGEPKKDLGSCVGDYVFLYAYGKEIGALVRTKLRCKPLIISTGHRVSLRTAIEYVLNCVKGYRLPEPTRQAHLAANAFRKQSQAGN</sequence>
<gene>
    <name evidence="1" type="primary">nfi</name>
    <name type="ordered locus">pc0623</name>
</gene>
<feature type="chain" id="PRO_0000159665" description="Endonuclease V">
    <location>
        <begin position="1"/>
        <end position="235"/>
    </location>
</feature>
<feature type="binding site" evidence="1">
    <location>
        <position position="47"/>
    </location>
    <ligand>
        <name>Mg(2+)</name>
        <dbReference type="ChEBI" id="CHEBI:18420"/>
    </ligand>
</feature>
<feature type="binding site" evidence="1">
    <location>
        <position position="117"/>
    </location>
    <ligand>
        <name>Mg(2+)</name>
        <dbReference type="ChEBI" id="CHEBI:18420"/>
    </ligand>
</feature>
<feature type="site" description="Interaction with target DNA" evidence="1">
    <location>
        <position position="87"/>
    </location>
</feature>
<name>NFI_PARUW</name>
<proteinExistence type="inferred from homology"/>
<comment type="function">
    <text evidence="1">DNA repair enzyme involved in the repair of deaminated bases. Selectively cleaves double-stranded DNA at the second phosphodiester bond 3' to a deoxyinosine leaving behind the intact lesion on the nicked DNA.</text>
</comment>
<comment type="catalytic activity">
    <reaction evidence="1">
        <text>Endonucleolytic cleavage at apurinic or apyrimidinic sites to products with a 5'-phosphate.</text>
        <dbReference type="EC" id="3.1.21.7"/>
    </reaction>
</comment>
<comment type="cofactor">
    <cofactor evidence="1">
        <name>Mg(2+)</name>
        <dbReference type="ChEBI" id="CHEBI:18420"/>
    </cofactor>
</comment>
<comment type="subcellular location">
    <subcellularLocation>
        <location evidence="1">Cytoplasm</location>
    </subcellularLocation>
</comment>
<comment type="similarity">
    <text evidence="1">Belongs to the endonuclease V family.</text>
</comment>
<protein>
    <recommendedName>
        <fullName evidence="1">Endonuclease V</fullName>
        <ecNumber evidence="1">3.1.21.7</ecNumber>
    </recommendedName>
    <alternativeName>
        <fullName evidence="1">Deoxyinosine 3'endonuclease</fullName>
    </alternativeName>
    <alternativeName>
        <fullName evidence="1">Deoxyribonuclease V</fullName>
        <shortName evidence="1">DNase V</shortName>
    </alternativeName>
</protein>
<organism>
    <name type="scientific">Protochlamydia amoebophila (strain UWE25)</name>
    <dbReference type="NCBI Taxonomy" id="264201"/>
    <lineage>
        <taxon>Bacteria</taxon>
        <taxon>Pseudomonadati</taxon>
        <taxon>Chlamydiota</taxon>
        <taxon>Chlamydiia</taxon>
        <taxon>Parachlamydiales</taxon>
        <taxon>Parachlamydiaceae</taxon>
        <taxon>Candidatus Protochlamydia</taxon>
    </lineage>
</organism>
<evidence type="ECO:0000255" key="1">
    <source>
        <dbReference type="HAMAP-Rule" id="MF_00801"/>
    </source>
</evidence>
<accession>Q6MDK2</accession>
<keyword id="KW-0963">Cytoplasm</keyword>
<keyword id="KW-0227">DNA damage</keyword>
<keyword id="KW-0234">DNA repair</keyword>
<keyword id="KW-0255">Endonuclease</keyword>
<keyword id="KW-0378">Hydrolase</keyword>
<keyword id="KW-0460">Magnesium</keyword>
<keyword id="KW-0479">Metal-binding</keyword>
<keyword id="KW-0540">Nuclease</keyword>
<keyword id="KW-1185">Reference proteome</keyword>